<dbReference type="EC" id="2.5.1.39" evidence="1"/>
<dbReference type="EMBL" id="AP008232">
    <property type="protein sequence ID" value="BAE75418.1"/>
    <property type="molecule type" value="Genomic_DNA"/>
</dbReference>
<dbReference type="RefSeq" id="WP_011411955.1">
    <property type="nucleotide sequence ID" value="NC_007712.1"/>
</dbReference>
<dbReference type="SMR" id="Q2NR07"/>
<dbReference type="STRING" id="343509.SG2143"/>
<dbReference type="KEGG" id="sgl:SG2143"/>
<dbReference type="eggNOG" id="COG0382">
    <property type="taxonomic scope" value="Bacteria"/>
</dbReference>
<dbReference type="HOGENOM" id="CLU_034879_1_0_6"/>
<dbReference type="OrthoDB" id="9782418at2"/>
<dbReference type="BioCyc" id="SGLO343509:SGP1_RS19765-MONOMER"/>
<dbReference type="UniPathway" id="UPA00232"/>
<dbReference type="Proteomes" id="UP000001932">
    <property type="component" value="Chromosome"/>
</dbReference>
<dbReference type="GO" id="GO:0005886">
    <property type="term" value="C:plasma membrane"/>
    <property type="evidence" value="ECO:0007669"/>
    <property type="project" value="UniProtKB-SubCell"/>
</dbReference>
<dbReference type="GO" id="GO:0008412">
    <property type="term" value="F:4-hydroxybenzoate polyprenyltransferase activity"/>
    <property type="evidence" value="ECO:0007669"/>
    <property type="project" value="UniProtKB-UniRule"/>
</dbReference>
<dbReference type="GO" id="GO:0006744">
    <property type="term" value="P:ubiquinone biosynthetic process"/>
    <property type="evidence" value="ECO:0007669"/>
    <property type="project" value="UniProtKB-UniRule"/>
</dbReference>
<dbReference type="CDD" id="cd13959">
    <property type="entry name" value="PT_UbiA_COQ2"/>
    <property type="match status" value="1"/>
</dbReference>
<dbReference type="FunFam" id="1.10.357.140:FF:000002">
    <property type="entry name" value="4-hydroxybenzoate octaprenyltransferase"/>
    <property type="match status" value="1"/>
</dbReference>
<dbReference type="FunFam" id="1.20.120.1780:FF:000001">
    <property type="entry name" value="4-hydroxybenzoate octaprenyltransferase"/>
    <property type="match status" value="1"/>
</dbReference>
<dbReference type="Gene3D" id="1.10.357.140">
    <property type="entry name" value="UbiA prenyltransferase"/>
    <property type="match status" value="1"/>
</dbReference>
<dbReference type="Gene3D" id="1.20.120.1780">
    <property type="entry name" value="UbiA prenyltransferase"/>
    <property type="match status" value="1"/>
</dbReference>
<dbReference type="HAMAP" id="MF_01635">
    <property type="entry name" value="UbiA"/>
    <property type="match status" value="1"/>
</dbReference>
<dbReference type="InterPro" id="IPR006370">
    <property type="entry name" value="HB_polyprenyltransferase-like"/>
</dbReference>
<dbReference type="InterPro" id="IPR039653">
    <property type="entry name" value="Prenyltransferase"/>
</dbReference>
<dbReference type="InterPro" id="IPR000537">
    <property type="entry name" value="UbiA_prenyltransferase"/>
</dbReference>
<dbReference type="InterPro" id="IPR030470">
    <property type="entry name" value="UbiA_prenylTrfase_CS"/>
</dbReference>
<dbReference type="InterPro" id="IPR044878">
    <property type="entry name" value="UbiA_sf"/>
</dbReference>
<dbReference type="NCBIfam" id="TIGR01474">
    <property type="entry name" value="ubiA_proteo"/>
    <property type="match status" value="1"/>
</dbReference>
<dbReference type="PANTHER" id="PTHR11048:SF28">
    <property type="entry name" value="4-HYDROXYBENZOATE POLYPRENYLTRANSFERASE, MITOCHONDRIAL"/>
    <property type="match status" value="1"/>
</dbReference>
<dbReference type="PANTHER" id="PTHR11048">
    <property type="entry name" value="PRENYLTRANSFERASES"/>
    <property type="match status" value="1"/>
</dbReference>
<dbReference type="Pfam" id="PF01040">
    <property type="entry name" value="UbiA"/>
    <property type="match status" value="1"/>
</dbReference>
<dbReference type="PROSITE" id="PS00943">
    <property type="entry name" value="UBIA"/>
    <property type="match status" value="1"/>
</dbReference>
<keyword id="KW-0997">Cell inner membrane</keyword>
<keyword id="KW-1003">Cell membrane</keyword>
<keyword id="KW-0460">Magnesium</keyword>
<keyword id="KW-0472">Membrane</keyword>
<keyword id="KW-0808">Transferase</keyword>
<keyword id="KW-0812">Transmembrane</keyword>
<keyword id="KW-1133">Transmembrane helix</keyword>
<keyword id="KW-0831">Ubiquinone biosynthesis</keyword>
<gene>
    <name evidence="1" type="primary">ubiA</name>
    <name type="ordered locus">SG2143</name>
</gene>
<reference key="1">
    <citation type="journal article" date="2006" name="Genome Res.">
        <title>Massive genome erosion and functional adaptations provide insights into the symbiotic lifestyle of Sodalis glossinidius in the tsetse host.</title>
        <authorList>
            <person name="Toh H."/>
            <person name="Weiss B.L."/>
            <person name="Perkin S.A.H."/>
            <person name="Yamashita A."/>
            <person name="Oshima K."/>
            <person name="Hattori M."/>
            <person name="Aksoy S."/>
        </authorList>
    </citation>
    <scope>NUCLEOTIDE SEQUENCE [LARGE SCALE GENOMIC DNA]</scope>
    <source>
        <strain>morsitans</strain>
    </source>
</reference>
<feature type="chain" id="PRO_0000262846" description="4-hydroxybenzoate octaprenyltransferase">
    <location>
        <begin position="1"/>
        <end position="290"/>
    </location>
</feature>
<feature type="transmembrane region" description="Helical" evidence="1">
    <location>
        <begin position="38"/>
        <end position="58"/>
    </location>
</feature>
<feature type="transmembrane region" description="Helical" evidence="1">
    <location>
        <begin position="99"/>
        <end position="119"/>
    </location>
</feature>
<feature type="transmembrane region" description="Helical" evidence="1">
    <location>
        <begin position="141"/>
        <end position="161"/>
    </location>
</feature>
<feature type="transmembrane region" description="Helical" evidence="1">
    <location>
        <begin position="213"/>
        <end position="233"/>
    </location>
</feature>
<feature type="transmembrane region" description="Helical" evidence="1">
    <location>
        <begin position="238"/>
        <end position="258"/>
    </location>
</feature>
<feature type="transmembrane region" description="Helical" evidence="1">
    <location>
        <begin position="268"/>
        <end position="288"/>
    </location>
</feature>
<evidence type="ECO:0000255" key="1">
    <source>
        <dbReference type="HAMAP-Rule" id="MF_01635"/>
    </source>
</evidence>
<organism>
    <name type="scientific">Sodalis glossinidius (strain morsitans)</name>
    <dbReference type="NCBI Taxonomy" id="343509"/>
    <lineage>
        <taxon>Bacteria</taxon>
        <taxon>Pseudomonadati</taxon>
        <taxon>Pseudomonadota</taxon>
        <taxon>Gammaproteobacteria</taxon>
        <taxon>Enterobacterales</taxon>
        <taxon>Bruguierivoracaceae</taxon>
        <taxon>Sodalis</taxon>
    </lineage>
</organism>
<name>UBIA_SODGM</name>
<sequence length="290" mass="32285">MDHSLTQDRWQAWCRLMRIDKPIGSLLLLWPTLWALWLAGMAIPALGTLTVFILGVFFMRAAGCVINDYADRKIDGHVKRTRARPLPSGAIGEKEAKLLFGALVGISFALVLTLNSMTIALSTVALALAWVYPFMKRYTHLPQLVLGAAFGWSIPMVFTAVSESLPLSCWLLFLANITWTVAYDTQYAMVDRDDDLRIGVKSTAILFGRFDKLIIGLLQLATLLLLGVIGWQLGLGRIYYLALAGAAGLFLWQQKLIVDREREACFRAFLNNNLVGMLIFVGILLSLLSY</sequence>
<protein>
    <recommendedName>
        <fullName evidence="1">4-hydroxybenzoate octaprenyltransferase</fullName>
        <ecNumber evidence="1">2.5.1.39</ecNumber>
    </recommendedName>
    <alternativeName>
        <fullName evidence="1">4-HB polyprenyltransferase</fullName>
    </alternativeName>
</protein>
<comment type="function">
    <text evidence="1">Catalyzes the prenylation of para-hydroxybenzoate (PHB) with an all-trans polyprenyl group. Mediates the second step in the final reaction sequence of ubiquinone-8 (UQ-8) biosynthesis, which is the condensation of the polyisoprenoid side chain with PHB, generating the first membrane-bound Q intermediate 3-octaprenyl-4-hydroxybenzoate.</text>
</comment>
<comment type="catalytic activity">
    <reaction evidence="1">
        <text>all-trans-octaprenyl diphosphate + 4-hydroxybenzoate = 4-hydroxy-3-(all-trans-octaprenyl)benzoate + diphosphate</text>
        <dbReference type="Rhea" id="RHEA:27782"/>
        <dbReference type="ChEBI" id="CHEBI:1617"/>
        <dbReference type="ChEBI" id="CHEBI:17879"/>
        <dbReference type="ChEBI" id="CHEBI:33019"/>
        <dbReference type="ChEBI" id="CHEBI:57711"/>
        <dbReference type="EC" id="2.5.1.39"/>
    </reaction>
</comment>
<comment type="cofactor">
    <cofactor evidence="1">
        <name>Mg(2+)</name>
        <dbReference type="ChEBI" id="CHEBI:18420"/>
    </cofactor>
</comment>
<comment type="pathway">
    <text evidence="1">Cofactor biosynthesis; ubiquinone biosynthesis.</text>
</comment>
<comment type="subcellular location">
    <subcellularLocation>
        <location evidence="1">Cell inner membrane</location>
        <topology evidence="1">Multi-pass membrane protein</topology>
    </subcellularLocation>
</comment>
<comment type="similarity">
    <text evidence="1">Belongs to the UbiA prenyltransferase family.</text>
</comment>
<accession>Q2NR07</accession>
<proteinExistence type="inferred from homology"/>